<sequence>MTEQVQDENKLIAERRAKLESIRPNCSANAHPNTFRRTHKAAELQEKYGQNTKEELEALGFKTSIAGRIMAKRGPFLVIQDVSGRIQAYAEKGVQADLKDRYQGLDIGDIIGVTGQLHLSGKGDLYVNMEEYQLLTKALRPLPEKFHGLTDQETRYRQRYVDLIVNEESRQAFVMRSKVVAAIRNFMIKKEFMEVETPMMHVIPGGASARPFITHHNALDMPMYLRIAPELYLKRLVVGGFERVFEINRNFRNEGLSPRHNPEFTMMEFYMAYADYKDLMDLTEELLSSIAIELLGSAQMPYGEHTVDFGGPYARLSMLEAIQKYNPDNATIQAMTYEQVKDLEFMRELAISLGIKIEKFWTCGQLLEEIFGETAEWQLMQPTFITGYPADISPLARRNDDNHFITDRFEFFIGGREVANGFSELNDAEDQDSRFKAQVDAKDAGDDEAMFYDADYITALEHGLPPTAGQGIGIDRLVMLFTNTHTIRDVILFPAMRPQA</sequence>
<organism>
    <name type="scientific">Shewanella sp. (strain MR-7)</name>
    <dbReference type="NCBI Taxonomy" id="60481"/>
    <lineage>
        <taxon>Bacteria</taxon>
        <taxon>Pseudomonadati</taxon>
        <taxon>Pseudomonadota</taxon>
        <taxon>Gammaproteobacteria</taxon>
        <taxon>Alteromonadales</taxon>
        <taxon>Shewanellaceae</taxon>
        <taxon>Shewanella</taxon>
    </lineage>
</organism>
<protein>
    <recommendedName>
        <fullName evidence="1">Lysine--tRNA ligase</fullName>
        <ecNumber evidence="1">6.1.1.6</ecNumber>
    </recommendedName>
    <alternativeName>
        <fullName evidence="1">Lysyl-tRNA synthetase</fullName>
        <shortName evidence="1">LysRS</shortName>
    </alternativeName>
</protein>
<feature type="chain" id="PRO_1000012933" description="Lysine--tRNA ligase">
    <location>
        <begin position="1"/>
        <end position="500"/>
    </location>
</feature>
<feature type="binding site" evidence="1">
    <location>
        <position position="410"/>
    </location>
    <ligand>
        <name>Mg(2+)</name>
        <dbReference type="ChEBI" id="CHEBI:18420"/>
        <label>1</label>
    </ligand>
</feature>
<feature type="binding site" evidence="1">
    <location>
        <position position="417"/>
    </location>
    <ligand>
        <name>Mg(2+)</name>
        <dbReference type="ChEBI" id="CHEBI:18420"/>
        <label>1</label>
    </ligand>
</feature>
<feature type="binding site" evidence="1">
    <location>
        <position position="417"/>
    </location>
    <ligand>
        <name>Mg(2+)</name>
        <dbReference type="ChEBI" id="CHEBI:18420"/>
        <label>2</label>
    </ligand>
</feature>
<keyword id="KW-0030">Aminoacyl-tRNA synthetase</keyword>
<keyword id="KW-0067">ATP-binding</keyword>
<keyword id="KW-0963">Cytoplasm</keyword>
<keyword id="KW-0436">Ligase</keyword>
<keyword id="KW-0460">Magnesium</keyword>
<keyword id="KW-0479">Metal-binding</keyword>
<keyword id="KW-0547">Nucleotide-binding</keyword>
<keyword id="KW-0648">Protein biosynthesis</keyword>
<name>SYK_SHESR</name>
<gene>
    <name evidence="1" type="primary">lysS</name>
    <name type="ordered locus">Shewmr7_3196</name>
</gene>
<proteinExistence type="inferred from homology"/>
<dbReference type="EC" id="6.1.1.6" evidence="1"/>
<dbReference type="EMBL" id="CP000444">
    <property type="protein sequence ID" value="ABI44180.1"/>
    <property type="molecule type" value="Genomic_DNA"/>
</dbReference>
<dbReference type="SMR" id="Q0HRS5"/>
<dbReference type="KEGG" id="shm:Shewmr7_3196"/>
<dbReference type="HOGENOM" id="CLU_008255_6_0_6"/>
<dbReference type="GO" id="GO:0005829">
    <property type="term" value="C:cytosol"/>
    <property type="evidence" value="ECO:0007669"/>
    <property type="project" value="TreeGrafter"/>
</dbReference>
<dbReference type="GO" id="GO:0005524">
    <property type="term" value="F:ATP binding"/>
    <property type="evidence" value="ECO:0007669"/>
    <property type="project" value="UniProtKB-UniRule"/>
</dbReference>
<dbReference type="GO" id="GO:0004824">
    <property type="term" value="F:lysine-tRNA ligase activity"/>
    <property type="evidence" value="ECO:0007669"/>
    <property type="project" value="UniProtKB-UniRule"/>
</dbReference>
<dbReference type="GO" id="GO:0000287">
    <property type="term" value="F:magnesium ion binding"/>
    <property type="evidence" value="ECO:0007669"/>
    <property type="project" value="UniProtKB-UniRule"/>
</dbReference>
<dbReference type="GO" id="GO:0000049">
    <property type="term" value="F:tRNA binding"/>
    <property type="evidence" value="ECO:0007669"/>
    <property type="project" value="TreeGrafter"/>
</dbReference>
<dbReference type="GO" id="GO:0006430">
    <property type="term" value="P:lysyl-tRNA aminoacylation"/>
    <property type="evidence" value="ECO:0007669"/>
    <property type="project" value="UniProtKB-UniRule"/>
</dbReference>
<dbReference type="CDD" id="cd00775">
    <property type="entry name" value="LysRS_core"/>
    <property type="match status" value="1"/>
</dbReference>
<dbReference type="CDD" id="cd04322">
    <property type="entry name" value="LysRS_N"/>
    <property type="match status" value="1"/>
</dbReference>
<dbReference type="FunFam" id="2.40.50.140:FF:000024">
    <property type="entry name" value="Lysine--tRNA ligase"/>
    <property type="match status" value="1"/>
</dbReference>
<dbReference type="FunFam" id="3.30.930.10:FF:000001">
    <property type="entry name" value="Lysine--tRNA ligase"/>
    <property type="match status" value="1"/>
</dbReference>
<dbReference type="Gene3D" id="3.30.930.10">
    <property type="entry name" value="Bira Bifunctional Protein, Domain 2"/>
    <property type="match status" value="1"/>
</dbReference>
<dbReference type="Gene3D" id="2.40.50.140">
    <property type="entry name" value="Nucleic acid-binding proteins"/>
    <property type="match status" value="1"/>
</dbReference>
<dbReference type="HAMAP" id="MF_00252">
    <property type="entry name" value="Lys_tRNA_synth_class2"/>
    <property type="match status" value="1"/>
</dbReference>
<dbReference type="InterPro" id="IPR004364">
    <property type="entry name" value="Aa-tRNA-synt_II"/>
</dbReference>
<dbReference type="InterPro" id="IPR006195">
    <property type="entry name" value="aa-tRNA-synth_II"/>
</dbReference>
<dbReference type="InterPro" id="IPR045864">
    <property type="entry name" value="aa-tRNA-synth_II/BPL/LPL"/>
</dbReference>
<dbReference type="InterPro" id="IPR002313">
    <property type="entry name" value="Lys-tRNA-ligase_II"/>
</dbReference>
<dbReference type="InterPro" id="IPR044136">
    <property type="entry name" value="Lys-tRNA-ligase_II_N"/>
</dbReference>
<dbReference type="InterPro" id="IPR018149">
    <property type="entry name" value="Lys-tRNA-synth_II_C"/>
</dbReference>
<dbReference type="InterPro" id="IPR012340">
    <property type="entry name" value="NA-bd_OB-fold"/>
</dbReference>
<dbReference type="InterPro" id="IPR004365">
    <property type="entry name" value="NA-bd_OB_tRNA"/>
</dbReference>
<dbReference type="NCBIfam" id="TIGR00499">
    <property type="entry name" value="lysS_bact"/>
    <property type="match status" value="1"/>
</dbReference>
<dbReference type="NCBIfam" id="NF001756">
    <property type="entry name" value="PRK00484.1"/>
    <property type="match status" value="1"/>
</dbReference>
<dbReference type="PANTHER" id="PTHR42918:SF15">
    <property type="entry name" value="LYSINE--TRNA LIGASE, CHLOROPLASTIC_MITOCHONDRIAL"/>
    <property type="match status" value="1"/>
</dbReference>
<dbReference type="PANTHER" id="PTHR42918">
    <property type="entry name" value="LYSYL-TRNA SYNTHETASE"/>
    <property type="match status" value="1"/>
</dbReference>
<dbReference type="Pfam" id="PF00152">
    <property type="entry name" value="tRNA-synt_2"/>
    <property type="match status" value="1"/>
</dbReference>
<dbReference type="Pfam" id="PF01336">
    <property type="entry name" value="tRNA_anti-codon"/>
    <property type="match status" value="1"/>
</dbReference>
<dbReference type="PRINTS" id="PR00982">
    <property type="entry name" value="TRNASYNTHLYS"/>
</dbReference>
<dbReference type="SUPFAM" id="SSF55681">
    <property type="entry name" value="Class II aaRS and biotin synthetases"/>
    <property type="match status" value="1"/>
</dbReference>
<dbReference type="SUPFAM" id="SSF50249">
    <property type="entry name" value="Nucleic acid-binding proteins"/>
    <property type="match status" value="1"/>
</dbReference>
<dbReference type="PROSITE" id="PS50862">
    <property type="entry name" value="AA_TRNA_LIGASE_II"/>
    <property type="match status" value="1"/>
</dbReference>
<comment type="catalytic activity">
    <reaction evidence="1">
        <text>tRNA(Lys) + L-lysine + ATP = L-lysyl-tRNA(Lys) + AMP + diphosphate</text>
        <dbReference type="Rhea" id="RHEA:20792"/>
        <dbReference type="Rhea" id="RHEA-COMP:9696"/>
        <dbReference type="Rhea" id="RHEA-COMP:9697"/>
        <dbReference type="ChEBI" id="CHEBI:30616"/>
        <dbReference type="ChEBI" id="CHEBI:32551"/>
        <dbReference type="ChEBI" id="CHEBI:33019"/>
        <dbReference type="ChEBI" id="CHEBI:78442"/>
        <dbReference type="ChEBI" id="CHEBI:78529"/>
        <dbReference type="ChEBI" id="CHEBI:456215"/>
        <dbReference type="EC" id="6.1.1.6"/>
    </reaction>
</comment>
<comment type="cofactor">
    <cofactor evidence="1">
        <name>Mg(2+)</name>
        <dbReference type="ChEBI" id="CHEBI:18420"/>
    </cofactor>
    <text evidence="1">Binds 3 Mg(2+) ions per subunit.</text>
</comment>
<comment type="subunit">
    <text evidence="1">Homodimer.</text>
</comment>
<comment type="subcellular location">
    <subcellularLocation>
        <location evidence="1">Cytoplasm</location>
    </subcellularLocation>
</comment>
<comment type="similarity">
    <text evidence="1">Belongs to the class-II aminoacyl-tRNA synthetase family.</text>
</comment>
<reference key="1">
    <citation type="submission" date="2006-08" db="EMBL/GenBank/DDBJ databases">
        <title>Complete sequence of chromosome 1 of Shewanella sp. MR-7.</title>
        <authorList>
            <person name="Copeland A."/>
            <person name="Lucas S."/>
            <person name="Lapidus A."/>
            <person name="Barry K."/>
            <person name="Detter J.C."/>
            <person name="Glavina del Rio T."/>
            <person name="Hammon N."/>
            <person name="Israni S."/>
            <person name="Dalin E."/>
            <person name="Tice H."/>
            <person name="Pitluck S."/>
            <person name="Kiss H."/>
            <person name="Brettin T."/>
            <person name="Bruce D."/>
            <person name="Han C."/>
            <person name="Tapia R."/>
            <person name="Gilna P."/>
            <person name="Schmutz J."/>
            <person name="Larimer F."/>
            <person name="Land M."/>
            <person name="Hauser L."/>
            <person name="Kyrpides N."/>
            <person name="Mikhailova N."/>
            <person name="Nealson K."/>
            <person name="Konstantinidis K."/>
            <person name="Klappenbach J."/>
            <person name="Tiedje J."/>
            <person name="Richardson P."/>
        </authorList>
    </citation>
    <scope>NUCLEOTIDE SEQUENCE [LARGE SCALE GENOMIC DNA]</scope>
    <source>
        <strain>MR-7</strain>
    </source>
</reference>
<accession>Q0HRS5</accession>
<evidence type="ECO:0000255" key="1">
    <source>
        <dbReference type="HAMAP-Rule" id="MF_00252"/>
    </source>
</evidence>